<feature type="chain" id="PRO_0000233658" description="Cytochrome b559 subunit beta">
    <location>
        <begin position="1"/>
        <end position="45"/>
    </location>
</feature>
<feature type="transmembrane region" description="Helical" evidence="1">
    <location>
        <begin position="20"/>
        <end position="36"/>
    </location>
</feature>
<feature type="binding site" description="axial binding residue" evidence="1">
    <location>
        <position position="24"/>
    </location>
    <ligand>
        <name>heme</name>
        <dbReference type="ChEBI" id="CHEBI:30413"/>
        <note>ligand shared with alpha subunit</note>
    </ligand>
    <ligandPart>
        <name>Fe</name>
        <dbReference type="ChEBI" id="CHEBI:18248"/>
    </ligandPart>
</feature>
<reference key="1">
    <citation type="submission" date="2005-08" db="EMBL/GenBank/DDBJ databases">
        <title>Complete sequence of Synechococcus sp. CC9902.</title>
        <authorList>
            <person name="Copeland A."/>
            <person name="Lucas S."/>
            <person name="Lapidus A."/>
            <person name="Barry K."/>
            <person name="Detter J.C."/>
            <person name="Glavina T."/>
            <person name="Hammon N."/>
            <person name="Israni S."/>
            <person name="Pitluck S."/>
            <person name="Martinez M."/>
            <person name="Schmutz J."/>
            <person name="Larimer F."/>
            <person name="Land M."/>
            <person name="Kyrpides N."/>
            <person name="Ivanova N."/>
            <person name="Richardson P."/>
        </authorList>
    </citation>
    <scope>NUCLEOTIDE SEQUENCE [LARGE SCALE GENOMIC DNA]</scope>
    <source>
        <strain>CC9902</strain>
    </source>
</reference>
<name>PSBF_SYNS9</name>
<sequence>MSQAPMATTPRNYPIFTVRWLALHTLGIPTVFFLGALAAMQFIRR</sequence>
<organism>
    <name type="scientific">Synechococcus sp. (strain CC9902)</name>
    <dbReference type="NCBI Taxonomy" id="316279"/>
    <lineage>
        <taxon>Bacteria</taxon>
        <taxon>Bacillati</taxon>
        <taxon>Cyanobacteriota</taxon>
        <taxon>Cyanophyceae</taxon>
        <taxon>Synechococcales</taxon>
        <taxon>Synechococcaceae</taxon>
        <taxon>Synechococcus</taxon>
    </lineage>
</organism>
<proteinExistence type="inferred from homology"/>
<gene>
    <name evidence="1" type="primary">psbF</name>
    <name type="ordered locus">Syncc9902_0226</name>
</gene>
<comment type="function">
    <text evidence="1">This b-type cytochrome is tightly associated with the reaction center of photosystem II (PSII). PSII is a light-driven water:plastoquinone oxidoreductase that uses light energy to abstract electrons from H(2)O, generating O(2) and a proton gradient subsequently used for ATP formation. It consists of a core antenna complex that captures photons, and an electron transfer chain that converts photonic excitation into a charge separation.</text>
</comment>
<comment type="cofactor">
    <cofactor evidence="1">
        <name>heme b</name>
        <dbReference type="ChEBI" id="CHEBI:60344"/>
    </cofactor>
    <text evidence="1">With its partner (PsbE) binds heme. PSII binds additional chlorophylls, carotenoids and specific lipids.</text>
</comment>
<comment type="subunit">
    <text evidence="1">Heterodimer of an alpha subunit and a beta subunit. PSII is composed of 1 copy each of membrane proteins PsbA, PsbB, PsbC, PsbD, PsbE, PsbF, PsbH, PsbI, PsbJ, PsbK, PsbL, PsbM, PsbT, PsbX, PsbY, PsbZ, Psb30/Ycf12, peripheral proteins PsbO, CyanoQ (PsbQ), PsbU, PsbV and a large number of cofactors. It forms dimeric complexes.</text>
</comment>
<comment type="subcellular location">
    <subcellularLocation>
        <location evidence="1">Cellular thylakoid membrane</location>
        <topology evidence="1">Single-pass membrane protein</topology>
    </subcellularLocation>
</comment>
<comment type="similarity">
    <text evidence="1">Belongs to the PsbE/PsbF family.</text>
</comment>
<protein>
    <recommendedName>
        <fullName evidence="1">Cytochrome b559 subunit beta</fullName>
    </recommendedName>
    <alternativeName>
        <fullName evidence="1">PSII reaction center subunit VI</fullName>
    </alternativeName>
</protein>
<dbReference type="EMBL" id="CP000097">
    <property type="protein sequence ID" value="ABB25201.1"/>
    <property type="molecule type" value="Genomic_DNA"/>
</dbReference>
<dbReference type="RefSeq" id="WP_011359062.1">
    <property type="nucleotide sequence ID" value="NC_007513.1"/>
</dbReference>
<dbReference type="SMR" id="Q3B0C7"/>
<dbReference type="STRING" id="316279.Syncc9902_0226"/>
<dbReference type="KEGG" id="sye:Syncc9902_0226"/>
<dbReference type="eggNOG" id="ENOG50332KX">
    <property type="taxonomic scope" value="Bacteria"/>
</dbReference>
<dbReference type="HOGENOM" id="CLU_211753_1_0_3"/>
<dbReference type="OrthoDB" id="532613at2"/>
<dbReference type="Proteomes" id="UP000002712">
    <property type="component" value="Chromosome"/>
</dbReference>
<dbReference type="GO" id="GO:0009539">
    <property type="term" value="C:photosystem II reaction center"/>
    <property type="evidence" value="ECO:0007669"/>
    <property type="project" value="InterPro"/>
</dbReference>
<dbReference type="GO" id="GO:0031676">
    <property type="term" value="C:plasma membrane-derived thylakoid membrane"/>
    <property type="evidence" value="ECO:0007669"/>
    <property type="project" value="UniProtKB-SubCell"/>
</dbReference>
<dbReference type="GO" id="GO:0009055">
    <property type="term" value="F:electron transfer activity"/>
    <property type="evidence" value="ECO:0007669"/>
    <property type="project" value="UniProtKB-UniRule"/>
</dbReference>
<dbReference type="GO" id="GO:0020037">
    <property type="term" value="F:heme binding"/>
    <property type="evidence" value="ECO:0007669"/>
    <property type="project" value="InterPro"/>
</dbReference>
<dbReference type="GO" id="GO:0005506">
    <property type="term" value="F:iron ion binding"/>
    <property type="evidence" value="ECO:0007669"/>
    <property type="project" value="UniProtKB-UniRule"/>
</dbReference>
<dbReference type="GO" id="GO:0009767">
    <property type="term" value="P:photosynthetic electron transport chain"/>
    <property type="evidence" value="ECO:0007669"/>
    <property type="project" value="InterPro"/>
</dbReference>
<dbReference type="HAMAP" id="MF_00643">
    <property type="entry name" value="PSII_PsbF"/>
    <property type="match status" value="1"/>
</dbReference>
<dbReference type="InterPro" id="IPR006241">
    <property type="entry name" value="PSII_cyt_b559_bsu"/>
</dbReference>
<dbReference type="InterPro" id="IPR006216">
    <property type="entry name" value="PSII_cyt_b559_CS"/>
</dbReference>
<dbReference type="InterPro" id="IPR013081">
    <property type="entry name" value="PSII_cyt_b559_N"/>
</dbReference>
<dbReference type="NCBIfam" id="TIGR01333">
    <property type="entry name" value="cyt_b559_beta"/>
    <property type="match status" value="1"/>
</dbReference>
<dbReference type="Pfam" id="PF00283">
    <property type="entry name" value="Cytochrom_B559"/>
    <property type="match status" value="1"/>
</dbReference>
<dbReference type="PIRSF" id="PIRSF000037">
    <property type="entry name" value="PsbF"/>
    <property type="match status" value="1"/>
</dbReference>
<dbReference type="SUPFAM" id="SSF161045">
    <property type="entry name" value="Cytochrome b559 subunits"/>
    <property type="match status" value="1"/>
</dbReference>
<dbReference type="PROSITE" id="PS00537">
    <property type="entry name" value="CYTOCHROME_B559"/>
    <property type="match status" value="1"/>
</dbReference>
<keyword id="KW-0249">Electron transport</keyword>
<keyword id="KW-0349">Heme</keyword>
<keyword id="KW-0408">Iron</keyword>
<keyword id="KW-0472">Membrane</keyword>
<keyword id="KW-0479">Metal-binding</keyword>
<keyword id="KW-0602">Photosynthesis</keyword>
<keyword id="KW-0604">Photosystem II</keyword>
<keyword id="KW-1185">Reference proteome</keyword>
<keyword id="KW-0793">Thylakoid</keyword>
<keyword id="KW-0812">Transmembrane</keyword>
<keyword id="KW-1133">Transmembrane helix</keyword>
<keyword id="KW-0813">Transport</keyword>
<accession>Q3B0C7</accession>
<evidence type="ECO:0000255" key="1">
    <source>
        <dbReference type="HAMAP-Rule" id="MF_00643"/>
    </source>
</evidence>